<feature type="chain" id="PRO_1000071226" description="Peptidyl-tRNA hydrolase">
    <location>
        <begin position="1"/>
        <end position="206"/>
    </location>
</feature>
<feature type="region of interest" description="Disordered" evidence="2">
    <location>
        <begin position="182"/>
        <end position="206"/>
    </location>
</feature>
<feature type="active site" description="Proton acceptor" evidence="1">
    <location>
        <position position="19"/>
    </location>
</feature>
<feature type="binding site" evidence="1">
    <location>
        <position position="14"/>
    </location>
    <ligand>
        <name>tRNA</name>
        <dbReference type="ChEBI" id="CHEBI:17843"/>
    </ligand>
</feature>
<feature type="binding site" evidence="1">
    <location>
        <position position="64"/>
    </location>
    <ligand>
        <name>tRNA</name>
        <dbReference type="ChEBI" id="CHEBI:17843"/>
    </ligand>
</feature>
<feature type="binding site" evidence="1">
    <location>
        <position position="66"/>
    </location>
    <ligand>
        <name>tRNA</name>
        <dbReference type="ChEBI" id="CHEBI:17843"/>
    </ligand>
</feature>
<feature type="site" description="Discriminates between blocked and unblocked aminoacyl-tRNA" evidence="1">
    <location>
        <position position="9"/>
    </location>
</feature>
<feature type="site" description="Stabilizes the basic form of H active site to accept a proton" evidence="1">
    <location>
        <position position="91"/>
    </location>
</feature>
<protein>
    <recommendedName>
        <fullName evidence="1">Peptidyl-tRNA hydrolase</fullName>
        <shortName evidence="1">Pth</shortName>
        <ecNumber evidence="1">3.1.1.29</ecNumber>
    </recommendedName>
</protein>
<name>PTH_DESRM</name>
<dbReference type="EC" id="3.1.1.29" evidence="1"/>
<dbReference type="EMBL" id="CP000612">
    <property type="protein sequence ID" value="ABO48659.1"/>
    <property type="molecule type" value="Genomic_DNA"/>
</dbReference>
<dbReference type="RefSeq" id="WP_011876503.1">
    <property type="nucleotide sequence ID" value="NC_009253.1"/>
</dbReference>
<dbReference type="SMR" id="A4J0Q6"/>
<dbReference type="STRING" id="349161.Dred_0109"/>
<dbReference type="KEGG" id="drm:Dred_0109"/>
<dbReference type="eggNOG" id="COG0193">
    <property type="taxonomic scope" value="Bacteria"/>
</dbReference>
<dbReference type="HOGENOM" id="CLU_062456_4_1_9"/>
<dbReference type="OrthoDB" id="9800507at2"/>
<dbReference type="Proteomes" id="UP000001556">
    <property type="component" value="Chromosome"/>
</dbReference>
<dbReference type="GO" id="GO:0005737">
    <property type="term" value="C:cytoplasm"/>
    <property type="evidence" value="ECO:0007669"/>
    <property type="project" value="UniProtKB-SubCell"/>
</dbReference>
<dbReference type="GO" id="GO:0004045">
    <property type="term" value="F:peptidyl-tRNA hydrolase activity"/>
    <property type="evidence" value="ECO:0007669"/>
    <property type="project" value="UniProtKB-UniRule"/>
</dbReference>
<dbReference type="GO" id="GO:0000049">
    <property type="term" value="F:tRNA binding"/>
    <property type="evidence" value="ECO:0007669"/>
    <property type="project" value="UniProtKB-UniRule"/>
</dbReference>
<dbReference type="GO" id="GO:0006515">
    <property type="term" value="P:protein quality control for misfolded or incompletely synthesized proteins"/>
    <property type="evidence" value="ECO:0007669"/>
    <property type="project" value="UniProtKB-UniRule"/>
</dbReference>
<dbReference type="GO" id="GO:0072344">
    <property type="term" value="P:rescue of stalled ribosome"/>
    <property type="evidence" value="ECO:0007669"/>
    <property type="project" value="UniProtKB-UniRule"/>
</dbReference>
<dbReference type="CDD" id="cd00462">
    <property type="entry name" value="PTH"/>
    <property type="match status" value="1"/>
</dbReference>
<dbReference type="FunFam" id="3.40.50.1470:FF:000001">
    <property type="entry name" value="Peptidyl-tRNA hydrolase"/>
    <property type="match status" value="1"/>
</dbReference>
<dbReference type="Gene3D" id="3.40.50.1470">
    <property type="entry name" value="Peptidyl-tRNA hydrolase"/>
    <property type="match status" value="1"/>
</dbReference>
<dbReference type="HAMAP" id="MF_00083">
    <property type="entry name" value="Pept_tRNA_hydro_bact"/>
    <property type="match status" value="1"/>
</dbReference>
<dbReference type="InterPro" id="IPR001328">
    <property type="entry name" value="Pept_tRNA_hydro"/>
</dbReference>
<dbReference type="InterPro" id="IPR018171">
    <property type="entry name" value="Pept_tRNA_hydro_CS"/>
</dbReference>
<dbReference type="InterPro" id="IPR036416">
    <property type="entry name" value="Pept_tRNA_hydro_sf"/>
</dbReference>
<dbReference type="NCBIfam" id="TIGR00447">
    <property type="entry name" value="pth"/>
    <property type="match status" value="1"/>
</dbReference>
<dbReference type="PANTHER" id="PTHR17224">
    <property type="entry name" value="PEPTIDYL-TRNA HYDROLASE"/>
    <property type="match status" value="1"/>
</dbReference>
<dbReference type="PANTHER" id="PTHR17224:SF1">
    <property type="entry name" value="PEPTIDYL-TRNA HYDROLASE"/>
    <property type="match status" value="1"/>
</dbReference>
<dbReference type="Pfam" id="PF01195">
    <property type="entry name" value="Pept_tRNA_hydro"/>
    <property type="match status" value="1"/>
</dbReference>
<dbReference type="SUPFAM" id="SSF53178">
    <property type="entry name" value="Peptidyl-tRNA hydrolase-like"/>
    <property type="match status" value="1"/>
</dbReference>
<dbReference type="PROSITE" id="PS01195">
    <property type="entry name" value="PEPT_TRNA_HYDROL_1"/>
    <property type="match status" value="1"/>
</dbReference>
<accession>A4J0Q6</accession>
<comment type="function">
    <text evidence="1">Hydrolyzes ribosome-free peptidyl-tRNAs (with 1 or more amino acids incorporated), which drop off the ribosome during protein synthesis, or as a result of ribosome stalling.</text>
</comment>
<comment type="function">
    <text evidence="1">Catalyzes the release of premature peptidyl moieties from peptidyl-tRNA molecules trapped in stalled 50S ribosomal subunits, and thus maintains levels of free tRNAs and 50S ribosomes.</text>
</comment>
<comment type="catalytic activity">
    <reaction evidence="1">
        <text>an N-acyl-L-alpha-aminoacyl-tRNA + H2O = an N-acyl-L-amino acid + a tRNA + H(+)</text>
        <dbReference type="Rhea" id="RHEA:54448"/>
        <dbReference type="Rhea" id="RHEA-COMP:10123"/>
        <dbReference type="Rhea" id="RHEA-COMP:13883"/>
        <dbReference type="ChEBI" id="CHEBI:15377"/>
        <dbReference type="ChEBI" id="CHEBI:15378"/>
        <dbReference type="ChEBI" id="CHEBI:59874"/>
        <dbReference type="ChEBI" id="CHEBI:78442"/>
        <dbReference type="ChEBI" id="CHEBI:138191"/>
        <dbReference type="EC" id="3.1.1.29"/>
    </reaction>
</comment>
<comment type="subunit">
    <text evidence="1">Monomer.</text>
</comment>
<comment type="subcellular location">
    <subcellularLocation>
        <location evidence="1">Cytoplasm</location>
    </subcellularLocation>
</comment>
<comment type="similarity">
    <text evidence="1">Belongs to the PTH family.</text>
</comment>
<gene>
    <name evidence="1" type="primary">pth</name>
    <name type="ordered locus">Dred_0109</name>
</gene>
<keyword id="KW-0963">Cytoplasm</keyword>
<keyword id="KW-0378">Hydrolase</keyword>
<keyword id="KW-1185">Reference proteome</keyword>
<keyword id="KW-0694">RNA-binding</keyword>
<keyword id="KW-0820">tRNA-binding</keyword>
<organism>
    <name type="scientific">Desulforamulus reducens (strain ATCC BAA-1160 / DSM 100696 / MI-1)</name>
    <name type="common">Desulfotomaculum reducens</name>
    <dbReference type="NCBI Taxonomy" id="349161"/>
    <lineage>
        <taxon>Bacteria</taxon>
        <taxon>Bacillati</taxon>
        <taxon>Bacillota</taxon>
        <taxon>Clostridia</taxon>
        <taxon>Eubacteriales</taxon>
        <taxon>Peptococcaceae</taxon>
        <taxon>Desulforamulus</taxon>
    </lineage>
</organism>
<proteinExistence type="inferred from homology"/>
<reference key="1">
    <citation type="submission" date="2007-03" db="EMBL/GenBank/DDBJ databases">
        <title>Complete sequence of Desulfotomaculum reducens MI-1.</title>
        <authorList>
            <consortium name="US DOE Joint Genome Institute"/>
            <person name="Copeland A."/>
            <person name="Lucas S."/>
            <person name="Lapidus A."/>
            <person name="Barry K."/>
            <person name="Detter J.C."/>
            <person name="Glavina del Rio T."/>
            <person name="Hammon N."/>
            <person name="Israni S."/>
            <person name="Dalin E."/>
            <person name="Tice H."/>
            <person name="Pitluck S."/>
            <person name="Sims D."/>
            <person name="Brettin T."/>
            <person name="Bruce D."/>
            <person name="Han C."/>
            <person name="Tapia R."/>
            <person name="Schmutz J."/>
            <person name="Larimer F."/>
            <person name="Land M."/>
            <person name="Hauser L."/>
            <person name="Kyrpides N."/>
            <person name="Kim E."/>
            <person name="Tebo B.M."/>
            <person name="Richardson P."/>
        </authorList>
    </citation>
    <scope>NUCLEOTIDE SEQUENCE [LARGE SCALE GENOMIC DNA]</scope>
    <source>
        <strain>ATCC BAA-1160 / DSM 100696 / MI-1</strain>
    </source>
</reference>
<evidence type="ECO:0000255" key="1">
    <source>
        <dbReference type="HAMAP-Rule" id="MF_00083"/>
    </source>
</evidence>
<evidence type="ECO:0000256" key="2">
    <source>
        <dbReference type="SAM" id="MobiDB-lite"/>
    </source>
</evidence>
<sequence>MKLIVGLGNPGTEYAKTRHNIGFMVIDRLADESRVSTEKNQHKAQICQITIGSEKVILAKPQTYMNLSGQSVVALMNWYKLSPDELFVITDDMDLPPGVLRIRKNGSAGGQRGLKNIIELLGTQQFPRMRVGIGRPEHGAVDHVLGKISEAEAELINPAIQTAVEAVKVWVLEGTQAAMNKFNQKNKKKKEKEQPEAATDQLLENK</sequence>